<reference key="1">
    <citation type="journal article" date="2002" name="Nature">
        <title>Genome sequence of the plant pathogen Ralstonia solanacearum.</title>
        <authorList>
            <person name="Salanoubat M."/>
            <person name="Genin S."/>
            <person name="Artiguenave F."/>
            <person name="Gouzy J."/>
            <person name="Mangenot S."/>
            <person name="Arlat M."/>
            <person name="Billault A."/>
            <person name="Brottier P."/>
            <person name="Camus J.-C."/>
            <person name="Cattolico L."/>
            <person name="Chandler M."/>
            <person name="Choisne N."/>
            <person name="Claudel-Renard C."/>
            <person name="Cunnac S."/>
            <person name="Demange N."/>
            <person name="Gaspin C."/>
            <person name="Lavie M."/>
            <person name="Moisan A."/>
            <person name="Robert C."/>
            <person name="Saurin W."/>
            <person name="Schiex T."/>
            <person name="Siguier P."/>
            <person name="Thebault P."/>
            <person name="Whalen M."/>
            <person name="Wincker P."/>
            <person name="Levy M."/>
            <person name="Weissenbach J."/>
            <person name="Boucher C.A."/>
        </authorList>
    </citation>
    <scope>NUCLEOTIDE SEQUENCE [LARGE SCALE GENOMIC DNA]</scope>
    <source>
        <strain>ATCC BAA-1114 / GMI1000</strain>
    </source>
</reference>
<evidence type="ECO:0000255" key="1">
    <source>
        <dbReference type="HAMAP-Rule" id="MF_01363"/>
    </source>
</evidence>
<evidence type="ECO:0000305" key="2"/>
<accession>Q8XVK8</accession>
<name>RL21_RALN1</name>
<proteinExistence type="inferred from homology"/>
<feature type="chain" id="PRO_0000269369" description="Large ribosomal subunit protein bL21">
    <location>
        <begin position="1"/>
        <end position="103"/>
    </location>
</feature>
<keyword id="KW-1185">Reference proteome</keyword>
<keyword id="KW-0687">Ribonucleoprotein</keyword>
<keyword id="KW-0689">Ribosomal protein</keyword>
<keyword id="KW-0694">RNA-binding</keyword>
<keyword id="KW-0699">rRNA-binding</keyword>
<gene>
    <name evidence="1" type="primary">rplU</name>
    <name type="ordered locus">RSc2822</name>
</gene>
<comment type="function">
    <text evidence="1">This protein binds to 23S rRNA in the presence of protein L20.</text>
</comment>
<comment type="subunit">
    <text evidence="1">Part of the 50S ribosomal subunit. Contacts protein L20.</text>
</comment>
<comment type="similarity">
    <text evidence="1">Belongs to the bacterial ribosomal protein bL21 family.</text>
</comment>
<dbReference type="EMBL" id="AL646052">
    <property type="protein sequence ID" value="CAD16529.1"/>
    <property type="molecule type" value="Genomic_DNA"/>
</dbReference>
<dbReference type="RefSeq" id="WP_011002728.1">
    <property type="nucleotide sequence ID" value="NC_003295.1"/>
</dbReference>
<dbReference type="SMR" id="Q8XVK8"/>
<dbReference type="STRING" id="267608.RSc2822"/>
<dbReference type="EnsemblBacteria" id="CAD16529">
    <property type="protein sequence ID" value="CAD16529"/>
    <property type="gene ID" value="RSc2822"/>
</dbReference>
<dbReference type="GeneID" id="93851409"/>
<dbReference type="KEGG" id="rso:RSc2822"/>
<dbReference type="eggNOG" id="COG0261">
    <property type="taxonomic scope" value="Bacteria"/>
</dbReference>
<dbReference type="HOGENOM" id="CLU_061463_3_2_4"/>
<dbReference type="Proteomes" id="UP000001436">
    <property type="component" value="Chromosome"/>
</dbReference>
<dbReference type="GO" id="GO:0005737">
    <property type="term" value="C:cytoplasm"/>
    <property type="evidence" value="ECO:0007669"/>
    <property type="project" value="UniProtKB-ARBA"/>
</dbReference>
<dbReference type="GO" id="GO:1990904">
    <property type="term" value="C:ribonucleoprotein complex"/>
    <property type="evidence" value="ECO:0007669"/>
    <property type="project" value="UniProtKB-KW"/>
</dbReference>
<dbReference type="GO" id="GO:0005840">
    <property type="term" value="C:ribosome"/>
    <property type="evidence" value="ECO:0007669"/>
    <property type="project" value="UniProtKB-KW"/>
</dbReference>
<dbReference type="GO" id="GO:0019843">
    <property type="term" value="F:rRNA binding"/>
    <property type="evidence" value="ECO:0007669"/>
    <property type="project" value="UniProtKB-UniRule"/>
</dbReference>
<dbReference type="GO" id="GO:0003735">
    <property type="term" value="F:structural constituent of ribosome"/>
    <property type="evidence" value="ECO:0007669"/>
    <property type="project" value="InterPro"/>
</dbReference>
<dbReference type="GO" id="GO:0006412">
    <property type="term" value="P:translation"/>
    <property type="evidence" value="ECO:0007669"/>
    <property type="project" value="UniProtKB-UniRule"/>
</dbReference>
<dbReference type="HAMAP" id="MF_01363">
    <property type="entry name" value="Ribosomal_bL21"/>
    <property type="match status" value="1"/>
</dbReference>
<dbReference type="InterPro" id="IPR028909">
    <property type="entry name" value="bL21-like"/>
</dbReference>
<dbReference type="InterPro" id="IPR036164">
    <property type="entry name" value="bL21-like_sf"/>
</dbReference>
<dbReference type="InterPro" id="IPR001787">
    <property type="entry name" value="Ribosomal_bL21"/>
</dbReference>
<dbReference type="InterPro" id="IPR018258">
    <property type="entry name" value="Ribosomal_bL21_CS"/>
</dbReference>
<dbReference type="NCBIfam" id="TIGR00061">
    <property type="entry name" value="L21"/>
    <property type="match status" value="1"/>
</dbReference>
<dbReference type="PANTHER" id="PTHR21349">
    <property type="entry name" value="50S RIBOSOMAL PROTEIN L21"/>
    <property type="match status" value="1"/>
</dbReference>
<dbReference type="PANTHER" id="PTHR21349:SF0">
    <property type="entry name" value="LARGE RIBOSOMAL SUBUNIT PROTEIN BL21M"/>
    <property type="match status" value="1"/>
</dbReference>
<dbReference type="Pfam" id="PF00829">
    <property type="entry name" value="Ribosomal_L21p"/>
    <property type="match status" value="1"/>
</dbReference>
<dbReference type="SUPFAM" id="SSF141091">
    <property type="entry name" value="L21p-like"/>
    <property type="match status" value="1"/>
</dbReference>
<dbReference type="PROSITE" id="PS01169">
    <property type="entry name" value="RIBOSOMAL_L21"/>
    <property type="match status" value="1"/>
</dbReference>
<sequence>MYAVVKTGGKQYKVAAGEKLKVEQIPADVGAEITLDQVLAVGAGDQLKVGAPLVSGAAVKATVISHGRHDKVKIFKMRRRKHYQKHQGHRQNYTELRIDSIVA</sequence>
<protein>
    <recommendedName>
        <fullName evidence="1">Large ribosomal subunit protein bL21</fullName>
    </recommendedName>
    <alternativeName>
        <fullName evidence="2">50S ribosomal protein L21</fullName>
    </alternativeName>
</protein>
<organism>
    <name type="scientific">Ralstonia nicotianae (strain ATCC BAA-1114 / GMI1000)</name>
    <name type="common">Ralstonia solanacearum</name>
    <dbReference type="NCBI Taxonomy" id="267608"/>
    <lineage>
        <taxon>Bacteria</taxon>
        <taxon>Pseudomonadati</taxon>
        <taxon>Pseudomonadota</taxon>
        <taxon>Betaproteobacteria</taxon>
        <taxon>Burkholderiales</taxon>
        <taxon>Burkholderiaceae</taxon>
        <taxon>Ralstonia</taxon>
        <taxon>Ralstonia solanacearum species complex</taxon>
    </lineage>
</organism>